<reference key="1">
    <citation type="journal article" date="2008" name="Clin. Exp. Metastasis">
        <title>A novel alpha(v)beta (3)-blocking disintegrin containing the RGD motive, DisBa-01, inhibits bFGF-induced angiogenesis and melanoma metastasis.</title>
        <authorList>
            <person name="Ramos O.H."/>
            <person name="Kauskot A."/>
            <person name="Cominetti M.R."/>
            <person name="Bechyne I."/>
            <person name="Salla Pontes C.L."/>
            <person name="Chareyre F."/>
            <person name="Manent J."/>
            <person name="Vassy R."/>
            <person name="Giovannini M."/>
            <person name="Legrand C."/>
            <person name="Selistre-de-Araujo H.S."/>
            <person name="Crepin M."/>
            <person name="Bonnefoy A."/>
        </authorList>
    </citation>
    <scope>NUCLEOTIDE SEQUENCE [MRNA]</scope>
    <scope>FUNCTION ON ITGAV/ITGB3</scope>
    <scope>3D-STRUCTURE MODELING IN COMPLEX WITH ALPHA-5/BETA-3 (ITGAV/ITGB3)</scope>
    <scope>SITES ARG-52; ARG-55; ASP-57; ARG-72; PHE-75 AND HIS-76</scope>
    <source>
        <tissue>Venom gland</tissue>
    </source>
</reference>
<reference key="2">
    <citation type="journal article" date="2008" name="Front. Biosci.">
        <title>Hemostatic effects of recombinant DisBa-01, a disintegrin from Bothrops alternatus.</title>
        <authorList>
            <person name="Kauskot A."/>
            <person name="Cominetti M.R."/>
            <person name="Ramos O.H."/>
            <person name="Bechyne I."/>
            <person name="Renard J.M."/>
            <person name="Hoylaerts M.F."/>
            <person name="Crepin M."/>
            <person name="Legrand C."/>
            <person name="Selistre-de-Araujo H.S."/>
            <person name="Bonnefoy A."/>
        </authorList>
    </citation>
    <scope>FUNCTION ON ITGA2B/ITGB3</scope>
</reference>
<reference key="3">
    <citation type="journal article" date="2010" name="Toxins">
        <title>Snake venom disintegrins and cell migration.</title>
        <authorList>
            <person name="Selistre-de-Araujo H.S."/>
            <person name="Pontes C.L."/>
            <person name="Montenegro C.F."/>
            <person name="Martin A.C."/>
        </authorList>
    </citation>
    <scope>FUNCTION</scope>
    <scope>REVIEW</scope>
</reference>
<reference key="4">
    <citation type="journal article" date="2012" name="Biochimie">
        <title>Blocking alphavbeta3 integrin by a recombinant RGD disintegrin impairs VEGF signaling in endothelial cells.</title>
        <authorList>
            <person name="Montenegro C.F."/>
            <person name="Salla-Pontes C.L."/>
            <person name="Ribeiro J.U."/>
            <person name="Machado A.Z."/>
            <person name="Ramos R.F."/>
            <person name="Figueiredo C.C."/>
            <person name="Morandi V."/>
            <person name="Selistre-de-Araujo H.S."/>
        </authorList>
    </citation>
    <scope>FUNCTION IN TUMOR MICROENVIRONMENT</scope>
</reference>
<name>VM2_BOTAL</name>
<proteinExistence type="evidence at protein level"/>
<keyword id="KW-1217">Cell adhesion impairing toxin</keyword>
<keyword id="KW-1015">Disulfide bond</keyword>
<keyword id="KW-1199">Hemostasis impairing toxin</keyword>
<keyword id="KW-1201">Platelet aggregation inhibiting toxin</keyword>
<keyword id="KW-0964">Secreted</keyword>
<keyword id="KW-0800">Toxin</keyword>
<protein>
    <recommendedName>
        <fullName evidence="8 9">Disintegrin DisBa-01</fullName>
    </recommendedName>
</protein>
<accession>Q801Z4</accession>
<comment type="function">
    <text evidence="4 5 6 7">This recombinant disintegrin antagonizes integrins alpha-IIb/beta-3 (ITGA2B/ITGB3) and alpha-V/beta-3 (ITGAV/ITGB3). On ITGA2B/ITGB3, it interferes with the outside/-in phosphorylation of the focal adhesion kinase (PTK2 / FAK) downstream of the integrin. It strongly inhibits platelet aggregation induced by ADP, thrombin, and collagen, abolishes and reverses dynamic platelet recruitment to immobilized fibrinogen. In vivo, it induces a dramatic increase in the tail bleeding time, and has a strong antithrombotic activity (PubMed:18508682). On ITGAV/ITGB3, it inhibits the adhesion of ITGAV/ITGB3-expressing human microvascular endothelial cell line and murine melanoma cell line to vitronectin (IC(50) are 555 nM and 225 nM, respectively), and transiently inhibits their proliferation without direct cell toxicity. In vivo, it potently inhibits angiogenesis and metastasis (PubMed:17952617), probably due to its capability to strongly inhibit the expression of VEGF and its receptors in endothelial cells (PubMed:22561350). It also inhibits tumor cell migration in vitro (PubMed:22069567).</text>
</comment>
<comment type="subunit">
    <text evidence="1">Monomer.</text>
</comment>
<comment type="subcellular location">
    <subcellularLocation>
        <location evidence="11">Secreted</location>
    </subcellularLocation>
</comment>
<comment type="tissue specificity">
    <text evidence="11">Expressed by the venom gland.</text>
</comment>
<comment type="miscellaneous">
    <text>Is derived from the P-II subfamily of the venom metalloproteinase (M12B) family.</text>
</comment>
<comment type="miscellaneous">
    <text evidence="11">The interaction between the disintegrin and the integrin ITGAV/ITGB3 is inhibited by EDTA, indicating a cation sensitive binding.</text>
</comment>
<comment type="miscellaneous">
    <text>The disintegrin belongs to the medium disintegrin subfamily.</text>
</comment>
<comment type="similarity">
    <text evidence="10">Belongs to the venom metalloproteinase (M12B) family. P-II subfamily. P-IIa sub-subfamily.</text>
</comment>
<feature type="chain" id="PRO_0000424615" description="Disintegrin DisBa-01">
    <location>
        <begin position="1"/>
        <end position="78"/>
    </location>
</feature>
<feature type="domain" description="Disintegrin" evidence="3">
    <location>
        <begin position="1"/>
        <end position="78"/>
    </location>
</feature>
<feature type="short sequence motif" description="Cell attachment site" evidence="3">
    <location>
        <begin position="56"/>
        <end position="58"/>
    </location>
</feature>
<feature type="site" description="May bind to alpha-V integrin (ITGAV) subunit">
    <location>
        <position position="53"/>
    </location>
</feature>
<feature type="site" description="May bind to alpha-V integrin (ITGAV) subunit">
    <location>
        <position position="56"/>
    </location>
</feature>
<feature type="site" description="May bind to metal ioncoordinated at the beta-3 integrin (ITGB3) subunit">
    <location>
        <position position="58"/>
    </location>
</feature>
<feature type="site" description="May bind to alpha-V integrin (ITGAV) subunit">
    <location>
        <position position="73"/>
    </location>
</feature>
<feature type="site" description="May bind to beta-3 integrin (ITGB3) subunit">
    <location>
        <position position="76"/>
    </location>
</feature>
<feature type="site" description="May bind to both beta-3 (ITGB3) and alpha-V (ITGAV) integrin subunits">
    <location>
        <position position="77"/>
    </location>
</feature>
<feature type="disulfide bond" evidence="2">
    <location>
        <begin position="11"/>
        <end position="26"/>
    </location>
</feature>
<feature type="disulfide bond" evidence="10">
    <location>
        <begin position="13"/>
        <end position="21"/>
    </location>
</feature>
<feature type="disulfide bond" evidence="2">
    <location>
        <begin position="20"/>
        <end position="43"/>
    </location>
</feature>
<feature type="disulfide bond" evidence="2">
    <location>
        <begin position="34"/>
        <end position="40"/>
    </location>
</feature>
<feature type="disulfide bond" evidence="2">
    <location>
        <begin position="39"/>
        <end position="64"/>
    </location>
</feature>
<feature type="disulfide bond" evidence="3">
    <location>
        <begin position="52"/>
        <end position="71"/>
    </location>
</feature>
<sequence length="78" mass="8236">GNELLEAGEECDCGTPGNPCCDAATCKLRPGAQCAEGLCCDQCRFMKEGTVCRIARGDDMDDYCNGISAGCPRNPFHA</sequence>
<organism>
    <name type="scientific">Bothrops alternatus</name>
    <name type="common">Urutu</name>
    <name type="synonym">Rhinocerophis alternatus</name>
    <dbReference type="NCBI Taxonomy" id="64174"/>
    <lineage>
        <taxon>Eukaryota</taxon>
        <taxon>Metazoa</taxon>
        <taxon>Chordata</taxon>
        <taxon>Craniata</taxon>
        <taxon>Vertebrata</taxon>
        <taxon>Euteleostomi</taxon>
        <taxon>Lepidosauria</taxon>
        <taxon>Squamata</taxon>
        <taxon>Bifurcata</taxon>
        <taxon>Unidentata</taxon>
        <taxon>Episquamata</taxon>
        <taxon>Toxicofera</taxon>
        <taxon>Serpentes</taxon>
        <taxon>Colubroidea</taxon>
        <taxon>Viperidae</taxon>
        <taxon>Crotalinae</taxon>
        <taxon>Bothrops</taxon>
    </lineage>
</organism>
<dbReference type="EMBL" id="AY259516">
    <property type="protein sequence ID" value="AAO75107.1"/>
    <property type="molecule type" value="mRNA"/>
</dbReference>
<dbReference type="SMR" id="Q801Z4"/>
<dbReference type="GO" id="GO:0005576">
    <property type="term" value="C:extracellular region"/>
    <property type="evidence" value="ECO:0007669"/>
    <property type="project" value="UniProtKB-SubCell"/>
</dbReference>
<dbReference type="GO" id="GO:0090729">
    <property type="term" value="F:toxin activity"/>
    <property type="evidence" value="ECO:0007669"/>
    <property type="project" value="UniProtKB-KW"/>
</dbReference>
<dbReference type="FunFam" id="4.10.70.10:FF:000005">
    <property type="entry name" value="Zinc metalloproteinase/disintegrin"/>
    <property type="match status" value="1"/>
</dbReference>
<dbReference type="Gene3D" id="4.10.70.10">
    <property type="entry name" value="Disintegrin domain"/>
    <property type="match status" value="1"/>
</dbReference>
<dbReference type="InterPro" id="IPR018358">
    <property type="entry name" value="Disintegrin_CS"/>
</dbReference>
<dbReference type="InterPro" id="IPR001762">
    <property type="entry name" value="Disintegrin_dom"/>
</dbReference>
<dbReference type="InterPro" id="IPR036436">
    <property type="entry name" value="Disintegrin_dom_sf"/>
</dbReference>
<dbReference type="PANTHER" id="PTHR11905">
    <property type="entry name" value="ADAM A DISINTEGRIN AND METALLOPROTEASE DOMAIN"/>
    <property type="match status" value="1"/>
</dbReference>
<dbReference type="PANTHER" id="PTHR11905:SF159">
    <property type="entry name" value="ADAM METALLOPROTEASE"/>
    <property type="match status" value="1"/>
</dbReference>
<dbReference type="Pfam" id="PF00200">
    <property type="entry name" value="Disintegrin"/>
    <property type="match status" value="1"/>
</dbReference>
<dbReference type="PRINTS" id="PR00289">
    <property type="entry name" value="DISINTEGRIN"/>
</dbReference>
<dbReference type="SMART" id="SM00050">
    <property type="entry name" value="DISIN"/>
    <property type="match status" value="1"/>
</dbReference>
<dbReference type="SUPFAM" id="SSF57552">
    <property type="entry name" value="Blood coagulation inhibitor (disintegrin)"/>
    <property type="match status" value="1"/>
</dbReference>
<dbReference type="PROSITE" id="PS00427">
    <property type="entry name" value="DISINTEGRIN_1"/>
    <property type="match status" value="1"/>
</dbReference>
<dbReference type="PROSITE" id="PS50214">
    <property type="entry name" value="DISINTEGRIN_2"/>
    <property type="match status" value="1"/>
</dbReference>
<evidence type="ECO:0000250" key="1"/>
<evidence type="ECO:0000250" key="2">
    <source>
        <dbReference type="UniProtKB" id="Q0NZX5"/>
    </source>
</evidence>
<evidence type="ECO:0000255" key="3">
    <source>
        <dbReference type="PROSITE-ProRule" id="PRU00068"/>
    </source>
</evidence>
<evidence type="ECO:0000269" key="4">
    <source>
    </source>
</evidence>
<evidence type="ECO:0000269" key="5">
    <source>
    </source>
</evidence>
<evidence type="ECO:0000269" key="6">
    <source>
    </source>
</evidence>
<evidence type="ECO:0000269" key="7">
    <source>
    </source>
</evidence>
<evidence type="ECO:0000303" key="8">
    <source>
    </source>
</evidence>
<evidence type="ECO:0000303" key="9">
    <source>
    </source>
</evidence>
<evidence type="ECO:0000305" key="10"/>
<evidence type="ECO:0000305" key="11">
    <source>
    </source>
</evidence>